<evidence type="ECO:0000255" key="1">
    <source>
        <dbReference type="HAMAP-Rule" id="MF_00691"/>
    </source>
</evidence>
<protein>
    <recommendedName>
        <fullName evidence="1">5-oxoprolinase subunit A</fullName>
        <shortName evidence="1">5-OPase subunit A</shortName>
        <ecNumber evidence="1">3.5.2.9</ecNumber>
    </recommendedName>
    <alternativeName>
        <fullName evidence="1">5-oxoprolinase (ATP-hydrolyzing) subunit A</fullName>
    </alternativeName>
</protein>
<name>PXPA_YERPB</name>
<dbReference type="EC" id="3.5.2.9" evidence="1"/>
<dbReference type="EMBL" id="CP001048">
    <property type="protein sequence ID" value="ACC89978.1"/>
    <property type="molecule type" value="Genomic_DNA"/>
</dbReference>
<dbReference type="RefSeq" id="WP_002209659.1">
    <property type="nucleotide sequence ID" value="NZ_CP009780.1"/>
</dbReference>
<dbReference type="SMR" id="B2KA67"/>
<dbReference type="GeneID" id="57975991"/>
<dbReference type="KEGG" id="ypb:YPTS_3021"/>
<dbReference type="PATRIC" id="fig|502801.10.peg.2451"/>
<dbReference type="GO" id="GO:0017168">
    <property type="term" value="F:5-oxoprolinase (ATP-hydrolyzing) activity"/>
    <property type="evidence" value="ECO:0007669"/>
    <property type="project" value="UniProtKB-UniRule"/>
</dbReference>
<dbReference type="GO" id="GO:0005524">
    <property type="term" value="F:ATP binding"/>
    <property type="evidence" value="ECO:0007669"/>
    <property type="project" value="UniProtKB-UniRule"/>
</dbReference>
<dbReference type="GO" id="GO:0005975">
    <property type="term" value="P:carbohydrate metabolic process"/>
    <property type="evidence" value="ECO:0007669"/>
    <property type="project" value="InterPro"/>
</dbReference>
<dbReference type="CDD" id="cd10800">
    <property type="entry name" value="LamB_YcsF_YbgL_like"/>
    <property type="match status" value="1"/>
</dbReference>
<dbReference type="Gene3D" id="3.20.20.370">
    <property type="entry name" value="Glycoside hydrolase/deacetylase"/>
    <property type="match status" value="1"/>
</dbReference>
<dbReference type="HAMAP" id="MF_00691">
    <property type="entry name" value="PxpA"/>
    <property type="match status" value="1"/>
</dbReference>
<dbReference type="InterPro" id="IPR011330">
    <property type="entry name" value="Glyco_hydro/deAcase_b/a-brl"/>
</dbReference>
<dbReference type="InterPro" id="IPR005501">
    <property type="entry name" value="LamB/YcsF/PxpA-like"/>
</dbReference>
<dbReference type="NCBIfam" id="NF003812">
    <property type="entry name" value="PRK05406.1-1"/>
    <property type="match status" value="1"/>
</dbReference>
<dbReference type="NCBIfam" id="NF003814">
    <property type="entry name" value="PRK05406.1-3"/>
    <property type="match status" value="1"/>
</dbReference>
<dbReference type="NCBIfam" id="NF003815">
    <property type="entry name" value="PRK05406.1-4"/>
    <property type="match status" value="1"/>
</dbReference>
<dbReference type="NCBIfam" id="NF003816">
    <property type="entry name" value="PRK05406.1-5"/>
    <property type="match status" value="1"/>
</dbReference>
<dbReference type="PANTHER" id="PTHR30292:SF0">
    <property type="entry name" value="5-OXOPROLINASE SUBUNIT A"/>
    <property type="match status" value="1"/>
</dbReference>
<dbReference type="PANTHER" id="PTHR30292">
    <property type="entry name" value="UNCHARACTERIZED PROTEIN YBGL-RELATED"/>
    <property type="match status" value="1"/>
</dbReference>
<dbReference type="Pfam" id="PF03746">
    <property type="entry name" value="LamB_YcsF"/>
    <property type="match status" value="1"/>
</dbReference>
<dbReference type="SUPFAM" id="SSF88713">
    <property type="entry name" value="Glycoside hydrolase/deacetylase"/>
    <property type="match status" value="1"/>
</dbReference>
<reference key="1">
    <citation type="submission" date="2008-04" db="EMBL/GenBank/DDBJ databases">
        <title>Complete sequence of Yersinia pseudotuberculosis PB1/+.</title>
        <authorList>
            <person name="Copeland A."/>
            <person name="Lucas S."/>
            <person name="Lapidus A."/>
            <person name="Glavina del Rio T."/>
            <person name="Dalin E."/>
            <person name="Tice H."/>
            <person name="Bruce D."/>
            <person name="Goodwin L."/>
            <person name="Pitluck S."/>
            <person name="Munk A.C."/>
            <person name="Brettin T."/>
            <person name="Detter J.C."/>
            <person name="Han C."/>
            <person name="Tapia R."/>
            <person name="Schmutz J."/>
            <person name="Larimer F."/>
            <person name="Land M."/>
            <person name="Hauser L."/>
            <person name="Challacombe J.F."/>
            <person name="Green L."/>
            <person name="Lindler L.E."/>
            <person name="Nikolich M.P."/>
            <person name="Richardson P."/>
        </authorList>
    </citation>
    <scope>NUCLEOTIDE SEQUENCE [LARGE SCALE GENOMIC DNA]</scope>
    <source>
        <strain>PB1/+</strain>
    </source>
</reference>
<gene>
    <name evidence="1" type="primary">pxpA</name>
    <name type="ordered locus">YPTS_3021</name>
</gene>
<accession>B2KA67</accession>
<comment type="function">
    <text evidence="1">Catalyzes the cleavage of 5-oxoproline to form L-glutamate coupled to the hydrolysis of ATP to ADP and inorganic phosphate.</text>
</comment>
<comment type="catalytic activity">
    <reaction evidence="1">
        <text>5-oxo-L-proline + ATP + 2 H2O = L-glutamate + ADP + phosphate + H(+)</text>
        <dbReference type="Rhea" id="RHEA:10348"/>
        <dbReference type="ChEBI" id="CHEBI:15377"/>
        <dbReference type="ChEBI" id="CHEBI:15378"/>
        <dbReference type="ChEBI" id="CHEBI:29985"/>
        <dbReference type="ChEBI" id="CHEBI:30616"/>
        <dbReference type="ChEBI" id="CHEBI:43474"/>
        <dbReference type="ChEBI" id="CHEBI:58402"/>
        <dbReference type="ChEBI" id="CHEBI:456216"/>
        <dbReference type="EC" id="3.5.2.9"/>
    </reaction>
</comment>
<comment type="subunit">
    <text evidence="1">Forms a complex composed of PxpA, PxpB and PxpC.</text>
</comment>
<comment type="similarity">
    <text evidence="1">Belongs to the LamB/PxpA family.</text>
</comment>
<organism>
    <name type="scientific">Yersinia pseudotuberculosis serotype IB (strain PB1/+)</name>
    <dbReference type="NCBI Taxonomy" id="502801"/>
    <lineage>
        <taxon>Bacteria</taxon>
        <taxon>Pseudomonadati</taxon>
        <taxon>Pseudomonadota</taxon>
        <taxon>Gammaproteobacteria</taxon>
        <taxon>Enterobacterales</taxon>
        <taxon>Yersiniaceae</taxon>
        <taxon>Yersinia</taxon>
    </lineage>
</organism>
<proteinExistence type="inferred from homology"/>
<feature type="chain" id="PRO_1000132079" description="5-oxoprolinase subunit A">
    <location>
        <begin position="1"/>
        <end position="245"/>
    </location>
</feature>
<keyword id="KW-0067">ATP-binding</keyword>
<keyword id="KW-0378">Hydrolase</keyword>
<keyword id="KW-0547">Nucleotide-binding</keyword>
<sequence>MKIDLNADLGEGCANDQALLQLVSSANIACGFHAGDAQTMRQSVRWALEYGVAIGAHPSFPDRENFGRTAMQLPPETVYAQVVYQLGALAAIVQVEGGVMQHVKPHGMLYNQAAVDPLLADAIAQAVKAVDPSLRLVGLAGSELIRAGTRVGLVTRQEVFADRHYQPDGTLVPRSQPDALIESDELALSQTLAMVQQHQVQACDGSWVQVQADTVCVHGDGVQALAFARCLRDRFQQEGISVIAQ</sequence>